<keyword id="KW-0963">Cytoplasm</keyword>
<keyword id="KW-0350">Heme biosynthesis</keyword>
<keyword id="KW-0479">Metal-binding</keyword>
<keyword id="KW-0560">Oxidoreductase</keyword>
<keyword id="KW-0627">Porphyrin biosynthesis</keyword>
<gene>
    <name evidence="1" type="primary">hemF</name>
    <name type="ordered locus">BPP2420</name>
</gene>
<reference key="1">
    <citation type="journal article" date="2003" name="Nat. Genet.">
        <title>Comparative analysis of the genome sequences of Bordetella pertussis, Bordetella parapertussis and Bordetella bronchiseptica.</title>
        <authorList>
            <person name="Parkhill J."/>
            <person name="Sebaihia M."/>
            <person name="Preston A."/>
            <person name="Murphy L.D."/>
            <person name="Thomson N.R."/>
            <person name="Harris D.E."/>
            <person name="Holden M.T.G."/>
            <person name="Churcher C.M."/>
            <person name="Bentley S.D."/>
            <person name="Mungall K.L."/>
            <person name="Cerdeno-Tarraga A.-M."/>
            <person name="Temple L."/>
            <person name="James K.D."/>
            <person name="Harris B."/>
            <person name="Quail M.A."/>
            <person name="Achtman M."/>
            <person name="Atkin R."/>
            <person name="Baker S."/>
            <person name="Basham D."/>
            <person name="Bason N."/>
            <person name="Cherevach I."/>
            <person name="Chillingworth T."/>
            <person name="Collins M."/>
            <person name="Cronin A."/>
            <person name="Davis P."/>
            <person name="Doggett J."/>
            <person name="Feltwell T."/>
            <person name="Goble A."/>
            <person name="Hamlin N."/>
            <person name="Hauser H."/>
            <person name="Holroyd S."/>
            <person name="Jagels K."/>
            <person name="Leather S."/>
            <person name="Moule S."/>
            <person name="Norberczak H."/>
            <person name="O'Neil S."/>
            <person name="Ormond D."/>
            <person name="Price C."/>
            <person name="Rabbinowitsch E."/>
            <person name="Rutter S."/>
            <person name="Sanders M."/>
            <person name="Saunders D."/>
            <person name="Seeger K."/>
            <person name="Sharp S."/>
            <person name="Simmonds M."/>
            <person name="Skelton J."/>
            <person name="Squares R."/>
            <person name="Squares S."/>
            <person name="Stevens K."/>
            <person name="Unwin L."/>
            <person name="Whitehead S."/>
            <person name="Barrell B.G."/>
            <person name="Maskell D.J."/>
        </authorList>
    </citation>
    <scope>NUCLEOTIDE SEQUENCE [LARGE SCALE GENOMIC DNA]</scope>
    <source>
        <strain>12822 / ATCC BAA-587 / NCTC 13253</strain>
    </source>
</reference>
<proteinExistence type="inferred from homology"/>
<organism>
    <name type="scientific">Bordetella parapertussis (strain 12822 / ATCC BAA-587 / NCTC 13253)</name>
    <dbReference type="NCBI Taxonomy" id="257311"/>
    <lineage>
        <taxon>Bacteria</taxon>
        <taxon>Pseudomonadati</taxon>
        <taxon>Pseudomonadota</taxon>
        <taxon>Betaproteobacteria</taxon>
        <taxon>Burkholderiales</taxon>
        <taxon>Alcaligenaceae</taxon>
        <taxon>Bordetella</taxon>
    </lineage>
</organism>
<comment type="function">
    <text evidence="1">Involved in the heme biosynthesis. Catalyzes the aerobic oxidative decarboxylation of propionate groups of rings A and B of coproporphyrinogen-III to yield the vinyl groups in protoporphyrinogen-IX.</text>
</comment>
<comment type="catalytic activity">
    <reaction evidence="1">
        <text>coproporphyrinogen III + O2 + 2 H(+) = protoporphyrinogen IX + 2 CO2 + 2 H2O</text>
        <dbReference type="Rhea" id="RHEA:18257"/>
        <dbReference type="ChEBI" id="CHEBI:15377"/>
        <dbReference type="ChEBI" id="CHEBI:15378"/>
        <dbReference type="ChEBI" id="CHEBI:15379"/>
        <dbReference type="ChEBI" id="CHEBI:16526"/>
        <dbReference type="ChEBI" id="CHEBI:57307"/>
        <dbReference type="ChEBI" id="CHEBI:57309"/>
        <dbReference type="EC" id="1.3.3.3"/>
    </reaction>
</comment>
<comment type="cofactor">
    <cofactor evidence="1">
        <name>a divalent metal cation</name>
        <dbReference type="ChEBI" id="CHEBI:60240"/>
    </cofactor>
</comment>
<comment type="pathway">
    <text evidence="1">Porphyrin-containing compound metabolism; protoporphyrin-IX biosynthesis; protoporphyrinogen-IX from coproporphyrinogen-III (O2 route): step 1/1.</text>
</comment>
<comment type="subunit">
    <text evidence="1">Homodimer.</text>
</comment>
<comment type="subcellular location">
    <subcellularLocation>
        <location evidence="1">Cytoplasm</location>
    </subcellularLocation>
</comment>
<comment type="similarity">
    <text evidence="1">Belongs to the aerobic coproporphyrinogen-III oxidase family.</text>
</comment>
<accession>Q7W7U0</accession>
<evidence type="ECO:0000255" key="1">
    <source>
        <dbReference type="HAMAP-Rule" id="MF_00333"/>
    </source>
</evidence>
<dbReference type="EC" id="1.3.3.3" evidence="1"/>
<dbReference type="EMBL" id="BX640430">
    <property type="protein sequence ID" value="CAE37716.1"/>
    <property type="molecule type" value="Genomic_DNA"/>
</dbReference>
<dbReference type="RefSeq" id="WP_010926320.1">
    <property type="nucleotide sequence ID" value="NC_002928.3"/>
</dbReference>
<dbReference type="SMR" id="Q7W7U0"/>
<dbReference type="GeneID" id="93204205"/>
<dbReference type="KEGG" id="bpa:BPP2420"/>
<dbReference type="HOGENOM" id="CLU_026169_0_1_4"/>
<dbReference type="UniPathway" id="UPA00251">
    <property type="reaction ID" value="UER00322"/>
</dbReference>
<dbReference type="Proteomes" id="UP000001421">
    <property type="component" value="Chromosome"/>
</dbReference>
<dbReference type="GO" id="GO:0005737">
    <property type="term" value="C:cytoplasm"/>
    <property type="evidence" value="ECO:0007669"/>
    <property type="project" value="UniProtKB-SubCell"/>
</dbReference>
<dbReference type="GO" id="GO:0004109">
    <property type="term" value="F:coproporphyrinogen oxidase activity"/>
    <property type="evidence" value="ECO:0007669"/>
    <property type="project" value="UniProtKB-UniRule"/>
</dbReference>
<dbReference type="GO" id="GO:0046872">
    <property type="term" value="F:metal ion binding"/>
    <property type="evidence" value="ECO:0007669"/>
    <property type="project" value="UniProtKB-KW"/>
</dbReference>
<dbReference type="GO" id="GO:0042803">
    <property type="term" value="F:protein homodimerization activity"/>
    <property type="evidence" value="ECO:0000250"/>
    <property type="project" value="UniProtKB"/>
</dbReference>
<dbReference type="GO" id="GO:0006782">
    <property type="term" value="P:protoporphyrinogen IX biosynthetic process"/>
    <property type="evidence" value="ECO:0007669"/>
    <property type="project" value="UniProtKB-UniRule"/>
</dbReference>
<dbReference type="FunFam" id="3.40.1500.10:FF:000001">
    <property type="entry name" value="Oxygen-dependent coproporphyrinogen-III oxidase"/>
    <property type="match status" value="1"/>
</dbReference>
<dbReference type="Gene3D" id="3.40.1500.10">
    <property type="entry name" value="Coproporphyrinogen III oxidase, aerobic"/>
    <property type="match status" value="1"/>
</dbReference>
<dbReference type="HAMAP" id="MF_00333">
    <property type="entry name" value="Coprogen_oxidas"/>
    <property type="match status" value="1"/>
</dbReference>
<dbReference type="InterPro" id="IPR001260">
    <property type="entry name" value="Coprogen_oxidase_aer"/>
</dbReference>
<dbReference type="InterPro" id="IPR036406">
    <property type="entry name" value="Coprogen_oxidase_aer_sf"/>
</dbReference>
<dbReference type="InterPro" id="IPR018375">
    <property type="entry name" value="Coprogen_oxidase_CS"/>
</dbReference>
<dbReference type="NCBIfam" id="NF003727">
    <property type="entry name" value="PRK05330.1"/>
    <property type="match status" value="1"/>
</dbReference>
<dbReference type="PANTHER" id="PTHR10755">
    <property type="entry name" value="COPROPORPHYRINOGEN III OXIDASE, MITOCHONDRIAL"/>
    <property type="match status" value="1"/>
</dbReference>
<dbReference type="PANTHER" id="PTHR10755:SF0">
    <property type="entry name" value="OXYGEN-DEPENDENT COPROPORPHYRINOGEN-III OXIDASE, MITOCHONDRIAL"/>
    <property type="match status" value="1"/>
</dbReference>
<dbReference type="Pfam" id="PF01218">
    <property type="entry name" value="Coprogen_oxidas"/>
    <property type="match status" value="1"/>
</dbReference>
<dbReference type="PIRSF" id="PIRSF000166">
    <property type="entry name" value="Coproporphyri_ox"/>
    <property type="match status" value="1"/>
</dbReference>
<dbReference type="PRINTS" id="PR00073">
    <property type="entry name" value="COPRGNOXDASE"/>
</dbReference>
<dbReference type="SUPFAM" id="SSF102886">
    <property type="entry name" value="Coproporphyrinogen III oxidase"/>
    <property type="match status" value="1"/>
</dbReference>
<dbReference type="PROSITE" id="PS01021">
    <property type="entry name" value="COPROGEN_OXIDASE"/>
    <property type="match status" value="1"/>
</dbReference>
<feature type="chain" id="PRO_0000109884" description="Oxygen-dependent coproporphyrinogen-III oxidase">
    <location>
        <begin position="1"/>
        <end position="303"/>
    </location>
</feature>
<feature type="region of interest" description="Important for dimerization" evidence="1">
    <location>
        <begin position="244"/>
        <end position="279"/>
    </location>
</feature>
<feature type="active site" description="Proton donor" evidence="1">
    <location>
        <position position="107"/>
    </location>
</feature>
<feature type="binding site" evidence="1">
    <location>
        <position position="93"/>
    </location>
    <ligand>
        <name>substrate</name>
    </ligand>
</feature>
<feature type="binding site" evidence="1">
    <location>
        <position position="97"/>
    </location>
    <ligand>
        <name>a divalent metal cation</name>
        <dbReference type="ChEBI" id="CHEBI:60240"/>
    </ligand>
</feature>
<feature type="binding site" evidence="1">
    <location>
        <position position="107"/>
    </location>
    <ligand>
        <name>a divalent metal cation</name>
        <dbReference type="ChEBI" id="CHEBI:60240"/>
    </ligand>
</feature>
<feature type="binding site" evidence="1">
    <location>
        <begin position="109"/>
        <end position="111"/>
    </location>
    <ligand>
        <name>substrate</name>
    </ligand>
</feature>
<feature type="binding site" evidence="1">
    <location>
        <position position="149"/>
    </location>
    <ligand>
        <name>a divalent metal cation</name>
        <dbReference type="ChEBI" id="CHEBI:60240"/>
    </ligand>
</feature>
<feature type="binding site" evidence="1">
    <location>
        <position position="179"/>
    </location>
    <ligand>
        <name>a divalent metal cation</name>
        <dbReference type="ChEBI" id="CHEBI:60240"/>
    </ligand>
</feature>
<feature type="binding site" evidence="1">
    <location>
        <begin position="262"/>
        <end position="264"/>
    </location>
    <ligand>
        <name>substrate</name>
    </ligand>
</feature>
<feature type="site" description="Important for dimerization" evidence="1">
    <location>
        <position position="179"/>
    </location>
</feature>
<sequence>MTAVAIPAVRDYLTDLQGRIVAALEQAGGEAFRTDAWQRAEGGGGVSRLLEGGQLFERAGVLFSHVKGTRLPPSASAHRPELAGRGWEAMGVSMVLHPRNPYVPTTHMNVRMFVAAARPGHAESDVFWFGGGLDLTPYYPFEDDARHFHRACRDALDPHGADYYPRYKQWCDEYFFLKHRNETRGIGGIFFDDLNDPGFDASFALTRSVGDSFLPAYLPIVQARRDMPYGERERDFQAYRRGRYVEFNLVFDRGTLFGLQSGGRTESILLSMPPLAQWRYDWQPQAGTPEAALAEFLRPREWV</sequence>
<protein>
    <recommendedName>
        <fullName evidence="1">Oxygen-dependent coproporphyrinogen-III oxidase</fullName>
        <shortName evidence="1">CPO</shortName>
        <shortName evidence="1">Coprogen oxidase</shortName>
        <shortName evidence="1">Coproporphyrinogenase</shortName>
        <ecNumber evidence="1">1.3.3.3</ecNumber>
    </recommendedName>
</protein>
<name>HEM6_BORPA</name>